<sequence>MTENVQLGALLAACHWIGEKGWCPATGGNMSLRLDSAQCLVTESGKDKGSLTADDFLLVETANNHVPSGRTPSAETGLHTLLYRLYPEINAVLHTHSVNATVLSRVERSNELVLHGYEMQKSLSGQRSHLDSVVIPIFDNDQDIPALAQRVAALADNHPLRYGFLVRGHGLYCWGNSVSEARRHLEGLEFLFQCELQRRLLDANFKLGAK</sequence>
<gene>
    <name evidence="1" type="primary">mtnB</name>
    <name type="ordered locus">YE3233</name>
</gene>
<evidence type="ECO:0000255" key="1">
    <source>
        <dbReference type="HAMAP-Rule" id="MF_01677"/>
    </source>
</evidence>
<evidence type="ECO:0000305" key="2"/>
<name>MTNB_YERE8</name>
<comment type="function">
    <text evidence="1">Catalyzes the dehydration of methylthioribulose-1-phosphate (MTRu-1-P) into 2,3-diketo-5-methylthiopentyl-1-phosphate (DK-MTP-1-P).</text>
</comment>
<comment type="catalytic activity">
    <reaction evidence="1">
        <text>5-(methylsulfanyl)-D-ribulose 1-phosphate = 5-methylsulfanyl-2,3-dioxopentyl phosphate + H2O</text>
        <dbReference type="Rhea" id="RHEA:15549"/>
        <dbReference type="ChEBI" id="CHEBI:15377"/>
        <dbReference type="ChEBI" id="CHEBI:58548"/>
        <dbReference type="ChEBI" id="CHEBI:58828"/>
        <dbReference type="EC" id="4.2.1.109"/>
    </reaction>
</comment>
<comment type="cofactor">
    <cofactor evidence="1">
        <name>Zn(2+)</name>
        <dbReference type="ChEBI" id="CHEBI:29105"/>
    </cofactor>
    <text evidence="1">Binds 1 zinc ion per subunit.</text>
</comment>
<comment type="pathway">
    <text evidence="1">Amino-acid biosynthesis; L-methionine biosynthesis via salvage pathway; L-methionine from S-methyl-5-thio-alpha-D-ribose 1-phosphate: step 2/6.</text>
</comment>
<comment type="similarity">
    <text evidence="1">Belongs to the aldolase class II family. MtnB subfamily.</text>
</comment>
<comment type="sequence caution" evidence="2">
    <conflict type="erroneous initiation">
        <sequence resource="EMBL-CDS" id="CAL13264"/>
    </conflict>
</comment>
<feature type="chain" id="PRO_0000357122" description="Methylthioribulose-1-phosphate dehydratase">
    <location>
        <begin position="1"/>
        <end position="210"/>
    </location>
</feature>
<feature type="binding site" evidence="1">
    <location>
        <position position="94"/>
    </location>
    <ligand>
        <name>Zn(2+)</name>
        <dbReference type="ChEBI" id="CHEBI:29105"/>
    </ligand>
</feature>
<feature type="binding site" evidence="1">
    <location>
        <position position="96"/>
    </location>
    <ligand>
        <name>Zn(2+)</name>
        <dbReference type="ChEBI" id="CHEBI:29105"/>
    </ligand>
</feature>
<organism>
    <name type="scientific">Yersinia enterocolitica serotype O:8 / biotype 1B (strain NCTC 13174 / 8081)</name>
    <dbReference type="NCBI Taxonomy" id="393305"/>
    <lineage>
        <taxon>Bacteria</taxon>
        <taxon>Pseudomonadati</taxon>
        <taxon>Pseudomonadota</taxon>
        <taxon>Gammaproteobacteria</taxon>
        <taxon>Enterobacterales</taxon>
        <taxon>Yersiniaceae</taxon>
        <taxon>Yersinia</taxon>
    </lineage>
</organism>
<dbReference type="EC" id="4.2.1.109" evidence="1"/>
<dbReference type="EMBL" id="AM286415">
    <property type="protein sequence ID" value="CAL13264.1"/>
    <property type="status" value="ALT_INIT"/>
    <property type="molecule type" value="Genomic_DNA"/>
</dbReference>
<dbReference type="RefSeq" id="WP_005167480.1">
    <property type="nucleotide sequence ID" value="NC_008800.1"/>
</dbReference>
<dbReference type="RefSeq" id="YP_001007408.1">
    <property type="nucleotide sequence ID" value="NC_008800.1"/>
</dbReference>
<dbReference type="SMR" id="A1JP13"/>
<dbReference type="KEGG" id="yen:YE3233"/>
<dbReference type="PATRIC" id="fig|393305.7.peg.3437"/>
<dbReference type="eggNOG" id="COG0235">
    <property type="taxonomic scope" value="Bacteria"/>
</dbReference>
<dbReference type="HOGENOM" id="CLU_006033_4_1_6"/>
<dbReference type="OrthoDB" id="9805559at2"/>
<dbReference type="UniPathway" id="UPA00904">
    <property type="reaction ID" value="UER00875"/>
</dbReference>
<dbReference type="Proteomes" id="UP000000642">
    <property type="component" value="Chromosome"/>
</dbReference>
<dbReference type="GO" id="GO:0005737">
    <property type="term" value="C:cytoplasm"/>
    <property type="evidence" value="ECO:0007669"/>
    <property type="project" value="InterPro"/>
</dbReference>
<dbReference type="GO" id="GO:0046570">
    <property type="term" value="F:methylthioribulose 1-phosphate dehydratase activity"/>
    <property type="evidence" value="ECO:0007669"/>
    <property type="project" value="UniProtKB-UniRule"/>
</dbReference>
<dbReference type="GO" id="GO:0008270">
    <property type="term" value="F:zinc ion binding"/>
    <property type="evidence" value="ECO:0007669"/>
    <property type="project" value="UniProtKB-UniRule"/>
</dbReference>
<dbReference type="GO" id="GO:0019509">
    <property type="term" value="P:L-methionine salvage from methylthioadenosine"/>
    <property type="evidence" value="ECO:0007669"/>
    <property type="project" value="UniProtKB-UniRule"/>
</dbReference>
<dbReference type="GO" id="GO:0005996">
    <property type="term" value="P:monosaccharide metabolic process"/>
    <property type="evidence" value="ECO:0007669"/>
    <property type="project" value="UniProtKB-ARBA"/>
</dbReference>
<dbReference type="Gene3D" id="3.40.225.10">
    <property type="entry name" value="Class II aldolase/adducin N-terminal domain"/>
    <property type="match status" value="1"/>
</dbReference>
<dbReference type="HAMAP" id="MF_01677">
    <property type="entry name" value="Salvage_MtnB"/>
    <property type="match status" value="1"/>
</dbReference>
<dbReference type="InterPro" id="IPR001303">
    <property type="entry name" value="Aldolase_II/adducin_N"/>
</dbReference>
<dbReference type="InterPro" id="IPR036409">
    <property type="entry name" value="Aldolase_II/adducin_N_sf"/>
</dbReference>
<dbReference type="InterPro" id="IPR017714">
    <property type="entry name" value="MethylthioRu-1-P_deHdtase_MtnB"/>
</dbReference>
<dbReference type="NCBIfam" id="NF006672">
    <property type="entry name" value="PRK09220.1"/>
    <property type="match status" value="1"/>
</dbReference>
<dbReference type="NCBIfam" id="TIGR03328">
    <property type="entry name" value="salvage_mtnB"/>
    <property type="match status" value="1"/>
</dbReference>
<dbReference type="PANTHER" id="PTHR10640">
    <property type="entry name" value="METHYLTHIORIBULOSE-1-PHOSPHATE DEHYDRATASE"/>
    <property type="match status" value="1"/>
</dbReference>
<dbReference type="PANTHER" id="PTHR10640:SF7">
    <property type="entry name" value="METHYLTHIORIBULOSE-1-PHOSPHATE DEHYDRATASE"/>
    <property type="match status" value="1"/>
</dbReference>
<dbReference type="Pfam" id="PF00596">
    <property type="entry name" value="Aldolase_II"/>
    <property type="match status" value="1"/>
</dbReference>
<dbReference type="SMART" id="SM01007">
    <property type="entry name" value="Aldolase_II"/>
    <property type="match status" value="1"/>
</dbReference>
<dbReference type="SUPFAM" id="SSF53639">
    <property type="entry name" value="AraD/HMP-PK domain-like"/>
    <property type="match status" value="1"/>
</dbReference>
<keyword id="KW-0028">Amino-acid biosynthesis</keyword>
<keyword id="KW-0456">Lyase</keyword>
<keyword id="KW-0479">Metal-binding</keyword>
<keyword id="KW-0486">Methionine biosynthesis</keyword>
<keyword id="KW-0862">Zinc</keyword>
<reference key="1">
    <citation type="journal article" date="2006" name="PLoS Genet.">
        <title>The complete genome sequence and comparative genome analysis of the high pathogenicity Yersinia enterocolitica strain 8081.</title>
        <authorList>
            <person name="Thomson N.R."/>
            <person name="Howard S."/>
            <person name="Wren B.W."/>
            <person name="Holden M.T.G."/>
            <person name="Crossman L."/>
            <person name="Challis G.L."/>
            <person name="Churcher C."/>
            <person name="Mungall K."/>
            <person name="Brooks K."/>
            <person name="Chillingworth T."/>
            <person name="Feltwell T."/>
            <person name="Abdellah Z."/>
            <person name="Hauser H."/>
            <person name="Jagels K."/>
            <person name="Maddison M."/>
            <person name="Moule S."/>
            <person name="Sanders M."/>
            <person name="Whitehead S."/>
            <person name="Quail M.A."/>
            <person name="Dougan G."/>
            <person name="Parkhill J."/>
            <person name="Prentice M.B."/>
        </authorList>
    </citation>
    <scope>NUCLEOTIDE SEQUENCE [LARGE SCALE GENOMIC DNA]</scope>
    <source>
        <strain>NCTC 13174 / 8081</strain>
    </source>
</reference>
<proteinExistence type="inferred from homology"/>
<protein>
    <recommendedName>
        <fullName evidence="1">Methylthioribulose-1-phosphate dehydratase</fullName>
        <shortName evidence="1">MTRu-1-P dehydratase</shortName>
        <ecNumber evidence="1">4.2.1.109</ecNumber>
    </recommendedName>
</protein>
<accession>A1JP13</accession>